<protein>
    <recommendedName>
        <fullName evidence="2">Adenylosuccinate synthetase</fullName>
        <shortName evidence="2">AMPSase</shortName>
        <shortName evidence="2">AdSS</shortName>
        <ecNumber evidence="2">6.3.4.4</ecNumber>
    </recommendedName>
    <alternativeName>
        <fullName evidence="2">IMP--aspartate ligase</fullName>
    </alternativeName>
</protein>
<accession>C4JYB4</accession>
<reference key="1">
    <citation type="journal article" date="2009" name="Genome Res.">
        <title>Comparative genomic analyses of the human fungal pathogens Coccidioides and their relatives.</title>
        <authorList>
            <person name="Sharpton T.J."/>
            <person name="Stajich J.E."/>
            <person name="Rounsley S.D."/>
            <person name="Gardner M.J."/>
            <person name="Wortman J.R."/>
            <person name="Jordar V.S."/>
            <person name="Maiti R."/>
            <person name="Kodira C.D."/>
            <person name="Neafsey D.E."/>
            <person name="Zeng Q."/>
            <person name="Hung C.-Y."/>
            <person name="McMahan C."/>
            <person name="Muszewska A."/>
            <person name="Grynberg M."/>
            <person name="Mandel M.A."/>
            <person name="Kellner E.M."/>
            <person name="Barker B.M."/>
            <person name="Galgiani J.N."/>
            <person name="Orbach M.J."/>
            <person name="Kirkland T.N."/>
            <person name="Cole G.T."/>
            <person name="Henn M.R."/>
            <person name="Birren B.W."/>
            <person name="Taylor J.W."/>
        </authorList>
    </citation>
    <scope>NUCLEOTIDE SEQUENCE [LARGE SCALE GENOMIC DNA]</scope>
    <source>
        <strain>UAMH 1704</strain>
    </source>
</reference>
<feature type="chain" id="PRO_0000399367" description="Adenylosuccinate synthetase">
    <location>
        <begin position="1"/>
        <end position="420"/>
    </location>
</feature>
<feature type="active site" description="Proton acceptor" evidence="2">
    <location>
        <position position="12"/>
    </location>
</feature>
<feature type="active site" description="Proton donor" evidence="2">
    <location>
        <position position="40"/>
    </location>
</feature>
<feature type="binding site" evidence="2">
    <location>
        <begin position="11"/>
        <end position="17"/>
    </location>
    <ligand>
        <name>GTP</name>
        <dbReference type="ChEBI" id="CHEBI:37565"/>
    </ligand>
</feature>
<feature type="binding site" description="in other chain" evidence="2">
    <location>
        <begin position="12"/>
        <end position="15"/>
    </location>
    <ligand>
        <name>IMP</name>
        <dbReference type="ChEBI" id="CHEBI:58053"/>
        <note>ligand shared between dimeric partners</note>
    </ligand>
</feature>
<feature type="binding site" evidence="2">
    <location>
        <position position="12"/>
    </location>
    <ligand>
        <name>Mg(2+)</name>
        <dbReference type="ChEBI" id="CHEBI:18420"/>
    </ligand>
</feature>
<feature type="binding site" description="in other chain" evidence="2">
    <location>
        <begin position="37"/>
        <end position="40"/>
    </location>
    <ligand>
        <name>IMP</name>
        <dbReference type="ChEBI" id="CHEBI:58053"/>
        <note>ligand shared between dimeric partners</note>
    </ligand>
</feature>
<feature type="binding site" evidence="2">
    <location>
        <begin position="39"/>
        <end position="41"/>
    </location>
    <ligand>
        <name>GTP</name>
        <dbReference type="ChEBI" id="CHEBI:37565"/>
    </ligand>
</feature>
<feature type="binding site" evidence="2">
    <location>
        <position position="39"/>
    </location>
    <ligand>
        <name>Mg(2+)</name>
        <dbReference type="ChEBI" id="CHEBI:18420"/>
    </ligand>
</feature>
<feature type="binding site" description="in other chain" evidence="2">
    <location>
        <position position="129"/>
    </location>
    <ligand>
        <name>IMP</name>
        <dbReference type="ChEBI" id="CHEBI:58053"/>
        <note>ligand shared between dimeric partners</note>
    </ligand>
</feature>
<feature type="binding site" evidence="2">
    <location>
        <position position="143"/>
    </location>
    <ligand>
        <name>IMP</name>
        <dbReference type="ChEBI" id="CHEBI:58053"/>
        <note>ligand shared between dimeric partners</note>
    </ligand>
</feature>
<feature type="binding site" description="in other chain" evidence="2">
    <location>
        <position position="218"/>
    </location>
    <ligand>
        <name>IMP</name>
        <dbReference type="ChEBI" id="CHEBI:58053"/>
        <note>ligand shared between dimeric partners</note>
    </ligand>
</feature>
<feature type="binding site" description="in other chain" evidence="2">
    <location>
        <position position="233"/>
    </location>
    <ligand>
        <name>IMP</name>
        <dbReference type="ChEBI" id="CHEBI:58053"/>
        <note>ligand shared between dimeric partners</note>
    </ligand>
</feature>
<feature type="binding site" evidence="2">
    <location>
        <begin position="293"/>
        <end position="299"/>
    </location>
    <ligand>
        <name>substrate</name>
    </ligand>
</feature>
<feature type="binding site" description="in other chain" evidence="2">
    <location>
        <position position="297"/>
    </location>
    <ligand>
        <name>IMP</name>
        <dbReference type="ChEBI" id="CHEBI:58053"/>
        <note>ligand shared between dimeric partners</note>
    </ligand>
</feature>
<feature type="binding site" evidence="2">
    <location>
        <position position="299"/>
    </location>
    <ligand>
        <name>GTP</name>
        <dbReference type="ChEBI" id="CHEBI:37565"/>
    </ligand>
</feature>
<feature type="binding site" evidence="2">
    <location>
        <begin position="325"/>
        <end position="327"/>
    </location>
    <ligand>
        <name>GTP</name>
        <dbReference type="ChEBI" id="CHEBI:37565"/>
    </ligand>
</feature>
<feature type="binding site" evidence="2">
    <location>
        <begin position="407"/>
        <end position="409"/>
    </location>
    <ligand>
        <name>GTP</name>
        <dbReference type="ChEBI" id="CHEBI:37565"/>
    </ligand>
</feature>
<organism>
    <name type="scientific">Uncinocarpus reesii (strain UAMH 1704)</name>
    <dbReference type="NCBI Taxonomy" id="336963"/>
    <lineage>
        <taxon>Eukaryota</taxon>
        <taxon>Fungi</taxon>
        <taxon>Dikarya</taxon>
        <taxon>Ascomycota</taxon>
        <taxon>Pezizomycotina</taxon>
        <taxon>Eurotiomycetes</taxon>
        <taxon>Eurotiomycetidae</taxon>
        <taxon>Onygenales</taxon>
        <taxon>Onygenaceae</taxon>
        <taxon>Uncinocarpus</taxon>
    </lineage>
</organism>
<evidence type="ECO:0000250" key="1"/>
<evidence type="ECO:0000255" key="2">
    <source>
        <dbReference type="HAMAP-Rule" id="MF_03125"/>
    </source>
</evidence>
<sequence length="420" mass="46373">MVTLVLGSQFGDEGKGKITDLLSQNADLCCRSAGGHNAGHTIIHDNVTYDFHILPSGLISPKCVNLIGSGTVVHVPSFFKELEALEGKGLKDAHKRVFISDRAHVCFDLHSVVDGLEEATLGGRKVGTTGKGIGPCYSDKAARRGVRIGQVLDEGVVETKLRSLEAGYRRRFGELNYDLEAEINRFKEYRTLLKPFVVDQLTLLRKHKDASILIEGANALMLDIDHGTYPYVTSSCTGLGGTIQGLCLNPTQIKSIIGVVKAYSTRVGSGPFPTEQINEIGEKLQVTGREFGVTTGRKRRCGWLDLVMCRYSTAINHYTALNLTKLDILDEFDEIKVAVAYRLEGKEIEFFPSDADVLEKVEVVYDTLPGWKTNTMGITKWEDLPPNAQKYIEYIEKDIGVPIKWVGTGPARSHMIERAQ</sequence>
<gene>
    <name type="ORF">UREG_07165</name>
</gene>
<name>PURA_UNCRE</name>
<keyword id="KW-0963">Cytoplasm</keyword>
<keyword id="KW-0342">GTP-binding</keyword>
<keyword id="KW-0436">Ligase</keyword>
<keyword id="KW-0460">Magnesium</keyword>
<keyword id="KW-0479">Metal-binding</keyword>
<keyword id="KW-0547">Nucleotide-binding</keyword>
<keyword id="KW-0658">Purine biosynthesis</keyword>
<keyword id="KW-1185">Reference proteome</keyword>
<proteinExistence type="inferred from homology"/>
<comment type="function">
    <text evidence="1">Plays an important role in the de novo pathway and in the salvage pathway of purine nucleotide biosynthesis. Catalyzes the first committed step in the biosynthesis of AMP from IMP (By similarity).</text>
</comment>
<comment type="catalytic activity">
    <reaction evidence="2">
        <text>IMP + L-aspartate + GTP = N(6)-(1,2-dicarboxyethyl)-AMP + GDP + phosphate + 2 H(+)</text>
        <dbReference type="Rhea" id="RHEA:15753"/>
        <dbReference type="ChEBI" id="CHEBI:15378"/>
        <dbReference type="ChEBI" id="CHEBI:29991"/>
        <dbReference type="ChEBI" id="CHEBI:37565"/>
        <dbReference type="ChEBI" id="CHEBI:43474"/>
        <dbReference type="ChEBI" id="CHEBI:57567"/>
        <dbReference type="ChEBI" id="CHEBI:58053"/>
        <dbReference type="ChEBI" id="CHEBI:58189"/>
        <dbReference type="EC" id="6.3.4.4"/>
    </reaction>
</comment>
<comment type="cofactor">
    <cofactor evidence="2">
        <name>Mg(2+)</name>
        <dbReference type="ChEBI" id="CHEBI:18420"/>
    </cofactor>
    <text evidence="2">Binds 1 Mg(2+) ion per subunit.</text>
</comment>
<comment type="pathway">
    <text evidence="2">Purine metabolism; AMP biosynthesis via de novo pathway; AMP from IMP: step 1/2.</text>
</comment>
<comment type="subunit">
    <text evidence="2">Homodimer.</text>
</comment>
<comment type="subcellular location">
    <subcellularLocation>
        <location evidence="2">Cytoplasm</location>
    </subcellularLocation>
</comment>
<comment type="similarity">
    <text evidence="2">Belongs to the adenylosuccinate synthetase family.</text>
</comment>
<dbReference type="EC" id="6.3.4.4" evidence="2"/>
<dbReference type="EMBL" id="CH476619">
    <property type="protein sequence ID" value="EEP82300.1"/>
    <property type="molecule type" value="Genomic_DNA"/>
</dbReference>
<dbReference type="RefSeq" id="XP_002582392.1">
    <property type="nucleotide sequence ID" value="XM_002582346.1"/>
</dbReference>
<dbReference type="SMR" id="C4JYB4"/>
<dbReference type="FunCoup" id="C4JYB4">
    <property type="interactions" value="713"/>
</dbReference>
<dbReference type="STRING" id="336963.C4JYB4"/>
<dbReference type="GeneID" id="8440660"/>
<dbReference type="KEGG" id="ure:UREG_07165"/>
<dbReference type="VEuPathDB" id="FungiDB:UREG_07165"/>
<dbReference type="eggNOG" id="KOG1355">
    <property type="taxonomic scope" value="Eukaryota"/>
</dbReference>
<dbReference type="HOGENOM" id="CLU_029848_3_2_1"/>
<dbReference type="InParanoid" id="C4JYB4"/>
<dbReference type="OMA" id="FHHAKPI"/>
<dbReference type="OrthoDB" id="10265645at2759"/>
<dbReference type="UniPathway" id="UPA00075">
    <property type="reaction ID" value="UER00335"/>
</dbReference>
<dbReference type="Proteomes" id="UP000002058">
    <property type="component" value="Unassembled WGS sequence"/>
</dbReference>
<dbReference type="GO" id="GO:0005737">
    <property type="term" value="C:cytoplasm"/>
    <property type="evidence" value="ECO:0007669"/>
    <property type="project" value="UniProtKB-SubCell"/>
</dbReference>
<dbReference type="GO" id="GO:0004019">
    <property type="term" value="F:adenylosuccinate synthase activity"/>
    <property type="evidence" value="ECO:0007669"/>
    <property type="project" value="UniProtKB-UniRule"/>
</dbReference>
<dbReference type="GO" id="GO:0016208">
    <property type="term" value="F:AMP binding"/>
    <property type="evidence" value="ECO:0007669"/>
    <property type="project" value="EnsemblFungi"/>
</dbReference>
<dbReference type="GO" id="GO:0019002">
    <property type="term" value="F:GMP binding"/>
    <property type="evidence" value="ECO:0007669"/>
    <property type="project" value="EnsemblFungi"/>
</dbReference>
<dbReference type="GO" id="GO:0005525">
    <property type="term" value="F:GTP binding"/>
    <property type="evidence" value="ECO:0007669"/>
    <property type="project" value="UniProtKB-UniRule"/>
</dbReference>
<dbReference type="GO" id="GO:0000287">
    <property type="term" value="F:magnesium ion binding"/>
    <property type="evidence" value="ECO:0007669"/>
    <property type="project" value="UniProtKB-UniRule"/>
</dbReference>
<dbReference type="GO" id="GO:0044208">
    <property type="term" value="P:'de novo' AMP biosynthetic process"/>
    <property type="evidence" value="ECO:0007669"/>
    <property type="project" value="UniProtKB-UniRule"/>
</dbReference>
<dbReference type="GO" id="GO:0071276">
    <property type="term" value="P:cellular response to cadmium ion"/>
    <property type="evidence" value="ECO:0007669"/>
    <property type="project" value="EnsemblFungi"/>
</dbReference>
<dbReference type="GO" id="GO:0046040">
    <property type="term" value="P:IMP metabolic process"/>
    <property type="evidence" value="ECO:0007669"/>
    <property type="project" value="TreeGrafter"/>
</dbReference>
<dbReference type="CDD" id="cd03108">
    <property type="entry name" value="AdSS"/>
    <property type="match status" value="1"/>
</dbReference>
<dbReference type="FunFam" id="1.10.300.10:FF:000001">
    <property type="entry name" value="Adenylosuccinate synthetase"/>
    <property type="match status" value="1"/>
</dbReference>
<dbReference type="FunFam" id="3.90.170.10:FF:000001">
    <property type="entry name" value="Adenylosuccinate synthetase"/>
    <property type="match status" value="1"/>
</dbReference>
<dbReference type="Gene3D" id="3.40.440.10">
    <property type="entry name" value="Adenylosuccinate Synthetase, subunit A, domain 1"/>
    <property type="match status" value="1"/>
</dbReference>
<dbReference type="Gene3D" id="1.10.300.10">
    <property type="entry name" value="Adenylosuccinate Synthetase, subunit A, domain 2"/>
    <property type="match status" value="1"/>
</dbReference>
<dbReference type="Gene3D" id="3.90.170.10">
    <property type="entry name" value="Adenylosuccinate Synthetase, subunit A, domain 3"/>
    <property type="match status" value="1"/>
</dbReference>
<dbReference type="HAMAP" id="MF_00011">
    <property type="entry name" value="Adenylosucc_synth"/>
    <property type="match status" value="1"/>
</dbReference>
<dbReference type="InterPro" id="IPR018220">
    <property type="entry name" value="Adenylosuccin_syn_GTP-bd"/>
</dbReference>
<dbReference type="InterPro" id="IPR033128">
    <property type="entry name" value="Adenylosuccin_syn_Lys_AS"/>
</dbReference>
<dbReference type="InterPro" id="IPR042109">
    <property type="entry name" value="Adenylosuccinate_synth_dom1"/>
</dbReference>
<dbReference type="InterPro" id="IPR042110">
    <property type="entry name" value="Adenylosuccinate_synth_dom2"/>
</dbReference>
<dbReference type="InterPro" id="IPR042111">
    <property type="entry name" value="Adenylosuccinate_synth_dom3"/>
</dbReference>
<dbReference type="InterPro" id="IPR001114">
    <property type="entry name" value="Adenylosuccinate_synthetase"/>
</dbReference>
<dbReference type="InterPro" id="IPR027417">
    <property type="entry name" value="P-loop_NTPase"/>
</dbReference>
<dbReference type="NCBIfam" id="NF002223">
    <property type="entry name" value="PRK01117.1"/>
    <property type="match status" value="1"/>
</dbReference>
<dbReference type="NCBIfam" id="TIGR00184">
    <property type="entry name" value="purA"/>
    <property type="match status" value="1"/>
</dbReference>
<dbReference type="PANTHER" id="PTHR11846">
    <property type="entry name" value="ADENYLOSUCCINATE SYNTHETASE"/>
    <property type="match status" value="1"/>
</dbReference>
<dbReference type="PANTHER" id="PTHR11846:SF0">
    <property type="entry name" value="ADENYLOSUCCINATE SYNTHETASE"/>
    <property type="match status" value="1"/>
</dbReference>
<dbReference type="Pfam" id="PF00709">
    <property type="entry name" value="Adenylsucc_synt"/>
    <property type="match status" value="1"/>
</dbReference>
<dbReference type="SMART" id="SM00788">
    <property type="entry name" value="Adenylsucc_synt"/>
    <property type="match status" value="1"/>
</dbReference>
<dbReference type="SUPFAM" id="SSF52540">
    <property type="entry name" value="P-loop containing nucleoside triphosphate hydrolases"/>
    <property type="match status" value="1"/>
</dbReference>
<dbReference type="PROSITE" id="PS01266">
    <property type="entry name" value="ADENYLOSUCCIN_SYN_1"/>
    <property type="match status" value="1"/>
</dbReference>
<dbReference type="PROSITE" id="PS00513">
    <property type="entry name" value="ADENYLOSUCCIN_SYN_2"/>
    <property type="match status" value="1"/>
</dbReference>